<name>FIBB_LAMVI</name>
<reference key="1">
    <citation type="journal article" date="1967" name="Arch. Biochem. Biophys.">
        <title>Amino acid sequence studies on artiodacty fibrinopeptides.</title>
        <authorList>
            <person name="Mross G.A."/>
            <person name="Doolittle R.F."/>
        </authorList>
    </citation>
    <scope>PROTEIN SEQUENCE</scope>
    <scope>SULFATION AT TYR-4</scope>
</reference>
<organism>
    <name type="scientific">Lama vicugna</name>
    <name type="common">Vicugna</name>
    <name type="synonym">Vicugna vicugna</name>
    <dbReference type="NCBI Taxonomy" id="9843"/>
    <lineage>
        <taxon>Eukaryota</taxon>
        <taxon>Metazoa</taxon>
        <taxon>Chordata</taxon>
        <taxon>Craniata</taxon>
        <taxon>Vertebrata</taxon>
        <taxon>Euteleostomi</taxon>
        <taxon>Mammalia</taxon>
        <taxon>Eutheria</taxon>
        <taxon>Laurasiatheria</taxon>
        <taxon>Artiodactyla</taxon>
        <taxon>Tylopoda</taxon>
        <taxon>Camelidae</taxon>
        <taxon>Vicugna</taxon>
    </lineage>
</organism>
<comment type="function">
    <text evidence="1">Cleaved by the protease thrombin to yield monomers which, together with fibrinogen alpha (FGA) and fibrinogen gamma (FGG), polymerize to form an insoluble fibrin matrix. Fibrin has a major function in hemostasis as one of the primary components of blood clots. In addition, functions during the early stages of wound repair to stabilize the lesion and guide cell migration during re-epithelialization. Was originally thought to be essential for platelet aggregation, based on in vitro studies using anticoagulated blood. However subsequent studies have shown that it is not absolutely required for thrombus formation in vivo. Enhances expression of SELP in activated platelets. Maternal fibrinogen is essential for successful pregnancy. Fibrin deposition is also associated with infection, where it protects against IFNG-mediated hemorrhage. May also facilitate the antibacterial immune response via both innate and T-cell mediated pathways.</text>
</comment>
<comment type="subunit">
    <text evidence="2">Heterohexamer; disulfide linked. Contains 2 sets of 3 non-identical chains (alpha, beta and gamma). The 2 heterotrimers are in head to head conformation with the N-termini in a small central domain (By similarity).</text>
</comment>
<comment type="subcellular location">
    <subcellularLocation>
        <location>Secreted</location>
    </subcellularLocation>
</comment>
<comment type="domain">
    <text evidence="2">A long coiled coil structure formed by 3 polypeptide chains connects the central nodule to the C-terminal domains (distal nodules). The long C-terminal ends of the alpha chains fold back, contributing a fourth strand to the coiled coil structure.</text>
</comment>
<comment type="PTM">
    <text>Conversion of fibrinogen to fibrin is triggered by thrombin, which cleaves fibrinopeptides A and B from alpha and beta chains, and thus exposes the N-terminal polymerization sites responsible for the formation of the soft clot.</text>
</comment>
<accession>P68124</accession>
<accession>P14473</accession>
<gene>
    <name type="primary">FGB</name>
</gene>
<proteinExistence type="evidence at protein level"/>
<dbReference type="GlyCosmos" id="P68124">
    <property type="glycosylation" value="1 site, No reported glycans"/>
</dbReference>
<dbReference type="GO" id="GO:0005576">
    <property type="term" value="C:extracellular region"/>
    <property type="evidence" value="ECO:0007669"/>
    <property type="project" value="UniProtKB-SubCell"/>
</dbReference>
<dbReference type="GO" id="GO:0002250">
    <property type="term" value="P:adaptive immune response"/>
    <property type="evidence" value="ECO:0007669"/>
    <property type="project" value="UniProtKB-KW"/>
</dbReference>
<dbReference type="GO" id="GO:0007596">
    <property type="term" value="P:blood coagulation"/>
    <property type="evidence" value="ECO:0007669"/>
    <property type="project" value="UniProtKB-KW"/>
</dbReference>
<dbReference type="GO" id="GO:0045087">
    <property type="term" value="P:innate immune response"/>
    <property type="evidence" value="ECO:0007669"/>
    <property type="project" value="UniProtKB-KW"/>
</dbReference>
<protein>
    <recommendedName>
        <fullName>Fibrinogen beta chain</fullName>
    </recommendedName>
    <component>
        <recommendedName>
            <fullName>Fibrinopeptide B</fullName>
        </recommendedName>
    </component>
</protein>
<feature type="peptide" id="PRO_0000009074" description="Fibrinopeptide B">
    <location>
        <begin position="1"/>
        <end position="19"/>
    </location>
</feature>
<feature type="modified residue" description="Sulfotyrosine" evidence="4">
    <location>
        <position position="4"/>
    </location>
</feature>
<feature type="glycosylation site" description="O-linked (GalNAc...) threonine" evidence="3">
    <location>
        <position position="2"/>
    </location>
</feature>
<feature type="non-terminal residue">
    <location>
        <position position="19"/>
    </location>
</feature>
<evidence type="ECO:0000250" key="1">
    <source>
        <dbReference type="UniProtKB" id="E9PV24"/>
    </source>
</evidence>
<evidence type="ECO:0000250" key="2">
    <source>
        <dbReference type="UniProtKB" id="P02675"/>
    </source>
</evidence>
<evidence type="ECO:0000250" key="3">
    <source>
        <dbReference type="UniProtKB" id="P02676"/>
    </source>
</evidence>
<evidence type="ECO:0000269" key="4">
    <source ref="1"/>
</evidence>
<keyword id="KW-1064">Adaptive immunity</keyword>
<keyword id="KW-0094">Blood coagulation</keyword>
<keyword id="KW-0175">Coiled coil</keyword>
<keyword id="KW-0903">Direct protein sequencing</keyword>
<keyword id="KW-1015">Disulfide bond</keyword>
<keyword id="KW-0325">Glycoprotein</keyword>
<keyword id="KW-0356">Hemostasis</keyword>
<keyword id="KW-0391">Immunity</keyword>
<keyword id="KW-0399">Innate immunity</keyword>
<keyword id="KW-0964">Secreted</keyword>
<keyword id="KW-0765">Sulfation</keyword>
<sequence>ATDYDEEEDDRVKVRLDAR</sequence>